<name>RF2_PECAS</name>
<accession>Q6D946</accession>
<keyword id="KW-0963">Cytoplasm</keyword>
<keyword id="KW-0488">Methylation</keyword>
<keyword id="KW-0648">Protein biosynthesis</keyword>
<keyword id="KW-1185">Reference proteome</keyword>
<comment type="function">
    <text evidence="1">Peptide chain release factor 2 directs the termination of translation in response to the peptide chain termination codons UGA and UAA.</text>
</comment>
<comment type="subcellular location">
    <subcellularLocation>
        <location evidence="1">Cytoplasm</location>
    </subcellularLocation>
</comment>
<comment type="PTM">
    <text evidence="1">Methylated by PrmC. Methylation increases the termination efficiency of RF2.</text>
</comment>
<comment type="similarity">
    <text evidence="1">Belongs to the prokaryotic/mitochondrial release factor family.</text>
</comment>
<dbReference type="EMBL" id="BX950851">
    <property type="protein sequence ID" value="CAG73687.1"/>
    <property type="molecule type" value="Genomic_DNA"/>
</dbReference>
<dbReference type="SMR" id="Q6D946"/>
<dbReference type="STRING" id="218491.ECA0773"/>
<dbReference type="KEGG" id="eca:ECA0773"/>
<dbReference type="eggNOG" id="COG1186">
    <property type="taxonomic scope" value="Bacteria"/>
</dbReference>
<dbReference type="HOGENOM" id="CLU_220733_1_0_6"/>
<dbReference type="OrthoDB" id="9806673at2"/>
<dbReference type="Proteomes" id="UP000007966">
    <property type="component" value="Chromosome"/>
</dbReference>
<dbReference type="GO" id="GO:0005737">
    <property type="term" value="C:cytoplasm"/>
    <property type="evidence" value="ECO:0007669"/>
    <property type="project" value="UniProtKB-SubCell"/>
</dbReference>
<dbReference type="GO" id="GO:0016149">
    <property type="term" value="F:translation release factor activity, codon specific"/>
    <property type="evidence" value="ECO:0007669"/>
    <property type="project" value="UniProtKB-UniRule"/>
</dbReference>
<dbReference type="FunFam" id="3.30.160.20:FF:000010">
    <property type="entry name" value="Peptide chain release factor 2"/>
    <property type="match status" value="1"/>
</dbReference>
<dbReference type="Gene3D" id="3.30.160.20">
    <property type="match status" value="1"/>
</dbReference>
<dbReference type="Gene3D" id="3.30.70.1660">
    <property type="match status" value="1"/>
</dbReference>
<dbReference type="Gene3D" id="1.20.58.410">
    <property type="entry name" value="Release factor"/>
    <property type="match status" value="1"/>
</dbReference>
<dbReference type="HAMAP" id="MF_00094">
    <property type="entry name" value="Rel_fac_2"/>
    <property type="match status" value="1"/>
</dbReference>
<dbReference type="InterPro" id="IPR005139">
    <property type="entry name" value="PCRF"/>
</dbReference>
<dbReference type="InterPro" id="IPR000352">
    <property type="entry name" value="Pep_chain_release_fac_I"/>
</dbReference>
<dbReference type="InterPro" id="IPR045853">
    <property type="entry name" value="Pep_chain_release_fac_I_sf"/>
</dbReference>
<dbReference type="InterPro" id="IPR004374">
    <property type="entry name" value="PrfB"/>
</dbReference>
<dbReference type="NCBIfam" id="TIGR00020">
    <property type="entry name" value="prfB"/>
    <property type="match status" value="1"/>
</dbReference>
<dbReference type="PANTHER" id="PTHR43116:SF3">
    <property type="entry name" value="CLASS I PEPTIDE CHAIN RELEASE FACTOR"/>
    <property type="match status" value="1"/>
</dbReference>
<dbReference type="PANTHER" id="PTHR43116">
    <property type="entry name" value="PEPTIDE CHAIN RELEASE FACTOR 2"/>
    <property type="match status" value="1"/>
</dbReference>
<dbReference type="Pfam" id="PF03462">
    <property type="entry name" value="PCRF"/>
    <property type="match status" value="1"/>
</dbReference>
<dbReference type="Pfam" id="PF00472">
    <property type="entry name" value="RF-1"/>
    <property type="match status" value="1"/>
</dbReference>
<dbReference type="SMART" id="SM00937">
    <property type="entry name" value="PCRF"/>
    <property type="match status" value="1"/>
</dbReference>
<dbReference type="SUPFAM" id="SSF75620">
    <property type="entry name" value="Release factor"/>
    <property type="match status" value="1"/>
</dbReference>
<dbReference type="PROSITE" id="PS00745">
    <property type="entry name" value="RF_PROK_I"/>
    <property type="match status" value="1"/>
</dbReference>
<proteinExistence type="inferred from homology"/>
<feature type="chain" id="PRO_1000004987" description="Peptide chain release factor 2">
    <location>
        <begin position="1"/>
        <end position="365"/>
    </location>
</feature>
<feature type="modified residue" description="N5-methylglutamine" evidence="1">
    <location>
        <position position="252"/>
    </location>
</feature>
<sequence length="365" mass="41172">MFEINPVKNRIQDLAERSAVLRGYLDYDAKKERLEEVNAELEQPDVWNEPERAQALGKERSSLEAIVDTIDQLAQGLEDVTGLLELAVEEDDEDTFNETSAELDVLENKLGQLEFRRMFSGEYDSADCYLDIQAGSGGTEAQDWASMLVRMYLRWAEAKGFKTEIIEESDGDVAGTKSATIKIIGDYAFGWLRTETGVHRLVRKSPFDSGGRRHTSFSSAFVYPEVDDDIDIEINPADLRIDVYRASGAGGQHVNRTESAVRITHLPTNIVTQCQNDRSQHKNKDQAMKQLKAKLYEFEMQKKNAEKQVMEDNKSDIGWGSQIRSYVLDDSRIKDLRTGVETRNTQAVLDGDLDKFIEASLKAGL</sequence>
<organism>
    <name type="scientific">Pectobacterium atrosepticum (strain SCRI 1043 / ATCC BAA-672)</name>
    <name type="common">Erwinia carotovora subsp. atroseptica</name>
    <dbReference type="NCBI Taxonomy" id="218491"/>
    <lineage>
        <taxon>Bacteria</taxon>
        <taxon>Pseudomonadati</taxon>
        <taxon>Pseudomonadota</taxon>
        <taxon>Gammaproteobacteria</taxon>
        <taxon>Enterobacterales</taxon>
        <taxon>Pectobacteriaceae</taxon>
        <taxon>Pectobacterium</taxon>
    </lineage>
</organism>
<reference key="1">
    <citation type="journal article" date="2004" name="Proc. Natl. Acad. Sci. U.S.A.">
        <title>Genome sequence of the enterobacterial phytopathogen Erwinia carotovora subsp. atroseptica and characterization of virulence factors.</title>
        <authorList>
            <person name="Bell K.S."/>
            <person name="Sebaihia M."/>
            <person name="Pritchard L."/>
            <person name="Holden M.T.G."/>
            <person name="Hyman L.J."/>
            <person name="Holeva M.C."/>
            <person name="Thomson N.R."/>
            <person name="Bentley S.D."/>
            <person name="Churcher L.J.C."/>
            <person name="Mungall K."/>
            <person name="Atkin R."/>
            <person name="Bason N."/>
            <person name="Brooks K."/>
            <person name="Chillingworth T."/>
            <person name="Clark K."/>
            <person name="Doggett J."/>
            <person name="Fraser A."/>
            <person name="Hance Z."/>
            <person name="Hauser H."/>
            <person name="Jagels K."/>
            <person name="Moule S."/>
            <person name="Norbertczak H."/>
            <person name="Ormond D."/>
            <person name="Price C."/>
            <person name="Quail M.A."/>
            <person name="Sanders M."/>
            <person name="Walker D."/>
            <person name="Whitehead S."/>
            <person name="Salmond G.P.C."/>
            <person name="Birch P.R.J."/>
            <person name="Parkhill J."/>
            <person name="Toth I.K."/>
        </authorList>
    </citation>
    <scope>NUCLEOTIDE SEQUENCE [LARGE SCALE GENOMIC DNA]</scope>
    <source>
        <strain>SCRI 1043 / ATCC BAA-672</strain>
    </source>
</reference>
<gene>
    <name evidence="1" type="primary">prfB</name>
    <name type="ordered locus">ECA0773</name>
</gene>
<evidence type="ECO:0000255" key="1">
    <source>
        <dbReference type="HAMAP-Rule" id="MF_00094"/>
    </source>
</evidence>
<protein>
    <recommendedName>
        <fullName evidence="1">Peptide chain release factor 2</fullName>
        <shortName evidence="1">RF-2</shortName>
    </recommendedName>
</protein>